<name>RET7_MOUSE</name>
<proteinExistence type="evidence at protein level"/>
<keyword id="KW-0963">Cytoplasm</keyword>
<keyword id="KW-1185">Reference proteome</keyword>
<keyword id="KW-0683">Retinol-binding</keyword>
<keyword id="KW-0813">Transport</keyword>
<keyword id="KW-0845">Vitamin A</keyword>
<gene>
    <name type="primary">Rbp7</name>
</gene>
<protein>
    <recommendedName>
        <fullName>Retinoid-binding protein 7</fullName>
    </recommendedName>
    <alternativeName>
        <fullName>Cellular retinoic acid-binding protein 4</fullName>
        <shortName>CRABP4</shortName>
        <shortName>CRBP4</shortName>
    </alternativeName>
    <alternativeName>
        <fullName>Cellular retinoic acid-binding protein IV</fullName>
        <shortName>CRABP-IV</shortName>
    </alternativeName>
</protein>
<organism>
    <name type="scientific">Mus musculus</name>
    <name type="common">Mouse</name>
    <dbReference type="NCBI Taxonomy" id="10090"/>
    <lineage>
        <taxon>Eukaryota</taxon>
        <taxon>Metazoa</taxon>
        <taxon>Chordata</taxon>
        <taxon>Craniata</taxon>
        <taxon>Vertebrata</taxon>
        <taxon>Euteleostomi</taxon>
        <taxon>Mammalia</taxon>
        <taxon>Eutheria</taxon>
        <taxon>Euarchontoglires</taxon>
        <taxon>Glires</taxon>
        <taxon>Rodentia</taxon>
        <taxon>Myomorpha</taxon>
        <taxon>Muroidea</taxon>
        <taxon>Muridae</taxon>
        <taxon>Murinae</taxon>
        <taxon>Mus</taxon>
        <taxon>Mus</taxon>
    </lineage>
</organism>
<dbReference type="EMBL" id="AF260927">
    <property type="protein sequence ID" value="AAG38491.1"/>
    <property type="molecule type" value="Genomic_DNA"/>
</dbReference>
<dbReference type="EMBL" id="AF260923">
    <property type="protein sequence ID" value="AAG17284.1"/>
    <property type="molecule type" value="mRNA"/>
</dbReference>
<dbReference type="EMBL" id="BC028432">
    <property type="protein sequence ID" value="AAH28432.1"/>
    <property type="molecule type" value="mRNA"/>
</dbReference>
<dbReference type="EMBL" id="AK003307">
    <property type="protein sequence ID" value="BAB22705.1"/>
    <property type="molecule type" value="mRNA"/>
</dbReference>
<dbReference type="CCDS" id="CCDS18959.1"/>
<dbReference type="RefSeq" id="NP_071303.1">
    <property type="nucleotide sequence ID" value="NM_022020.2"/>
</dbReference>
<dbReference type="SMR" id="Q9EPC5"/>
<dbReference type="FunCoup" id="Q9EPC5">
    <property type="interactions" value="1068"/>
</dbReference>
<dbReference type="STRING" id="10090.ENSMUSP00000030848"/>
<dbReference type="PaxDb" id="10090-ENSMUSP00000030848"/>
<dbReference type="ProteomicsDB" id="254917"/>
<dbReference type="Antibodypedia" id="27796">
    <property type="antibodies" value="129 antibodies from 21 providers"/>
</dbReference>
<dbReference type="DNASU" id="63954"/>
<dbReference type="Ensembl" id="ENSMUST00000030848.3">
    <property type="protein sequence ID" value="ENSMUSP00000030848.3"/>
    <property type="gene ID" value="ENSMUSG00000028996.10"/>
</dbReference>
<dbReference type="GeneID" id="63954"/>
<dbReference type="KEGG" id="mmu:63954"/>
<dbReference type="UCSC" id="uc008vwh.1">
    <property type="organism name" value="mouse"/>
</dbReference>
<dbReference type="AGR" id="MGI:1890409"/>
<dbReference type="CTD" id="116362"/>
<dbReference type="MGI" id="MGI:1890409">
    <property type="gene designation" value="Rbp7"/>
</dbReference>
<dbReference type="VEuPathDB" id="HostDB:ENSMUSG00000028996"/>
<dbReference type="eggNOG" id="KOG4015">
    <property type="taxonomic scope" value="Eukaryota"/>
</dbReference>
<dbReference type="GeneTree" id="ENSGT00940000162218"/>
<dbReference type="HOGENOM" id="CLU_113772_5_1_1"/>
<dbReference type="InParanoid" id="Q9EPC5"/>
<dbReference type="OMA" id="YFVQFKI"/>
<dbReference type="OrthoDB" id="354351at2759"/>
<dbReference type="PhylomeDB" id="Q9EPC5"/>
<dbReference type="TreeFam" id="TF316894"/>
<dbReference type="BioGRID-ORCS" id="63954">
    <property type="hits" value="5 hits in 80 CRISPR screens"/>
</dbReference>
<dbReference type="ChiTaRS" id="Rbp7">
    <property type="organism name" value="mouse"/>
</dbReference>
<dbReference type="PRO" id="PR:Q9EPC5"/>
<dbReference type="Proteomes" id="UP000000589">
    <property type="component" value="Chromosome 4"/>
</dbReference>
<dbReference type="RNAct" id="Q9EPC5">
    <property type="molecule type" value="protein"/>
</dbReference>
<dbReference type="Bgee" id="ENSMUSG00000028996">
    <property type="expression patterns" value="Expressed in interventricular septum and 114 other cell types or tissues"/>
</dbReference>
<dbReference type="ExpressionAtlas" id="Q9EPC5">
    <property type="expression patterns" value="baseline and differential"/>
</dbReference>
<dbReference type="GO" id="GO:0005737">
    <property type="term" value="C:cytoplasm"/>
    <property type="evidence" value="ECO:0007669"/>
    <property type="project" value="UniProtKB-SubCell"/>
</dbReference>
<dbReference type="GO" id="GO:0016918">
    <property type="term" value="F:retinal binding"/>
    <property type="evidence" value="ECO:0007669"/>
    <property type="project" value="UniProtKB-KW"/>
</dbReference>
<dbReference type="GO" id="GO:0005501">
    <property type="term" value="F:retinoid binding"/>
    <property type="evidence" value="ECO:0000314"/>
    <property type="project" value="MGI"/>
</dbReference>
<dbReference type="GO" id="GO:0019841">
    <property type="term" value="F:retinol binding"/>
    <property type="evidence" value="ECO:0007669"/>
    <property type="project" value="UniProtKB-KW"/>
</dbReference>
<dbReference type="CDD" id="cd19465">
    <property type="entry name" value="CRBP4"/>
    <property type="match status" value="1"/>
</dbReference>
<dbReference type="FunFam" id="2.40.128.20:FF:000001">
    <property type="entry name" value="Fatty acid-binding protein, adipocyte"/>
    <property type="match status" value="1"/>
</dbReference>
<dbReference type="Gene3D" id="2.40.128.20">
    <property type="match status" value="1"/>
</dbReference>
<dbReference type="InterPro" id="IPR012674">
    <property type="entry name" value="Calycin"/>
</dbReference>
<dbReference type="InterPro" id="IPR000463">
    <property type="entry name" value="Fatty_acid-bd"/>
</dbReference>
<dbReference type="InterPro" id="IPR031259">
    <property type="entry name" value="ILBP"/>
</dbReference>
<dbReference type="InterPro" id="IPR000566">
    <property type="entry name" value="Lipocln_cytosolic_FA-bd_dom"/>
</dbReference>
<dbReference type="PANTHER" id="PTHR11955">
    <property type="entry name" value="FATTY ACID BINDING PROTEIN"/>
    <property type="match status" value="1"/>
</dbReference>
<dbReference type="Pfam" id="PF00061">
    <property type="entry name" value="Lipocalin"/>
    <property type="match status" value="1"/>
</dbReference>
<dbReference type="PRINTS" id="PR00178">
    <property type="entry name" value="FATTYACIDBP"/>
</dbReference>
<dbReference type="SUPFAM" id="SSF50814">
    <property type="entry name" value="Lipocalins"/>
    <property type="match status" value="1"/>
</dbReference>
<dbReference type="PROSITE" id="PS00214">
    <property type="entry name" value="FABP"/>
    <property type="match status" value="1"/>
</dbReference>
<reference key="1">
    <citation type="journal article" date="2000" name="Proc. Natl. Acad. Sci. U.S.A.">
        <title>A Ufd2/D4Cole1e chimeric protein and overexpression of Rbp7 in the slow Wallerian degeneration (WldS) mouse.</title>
        <authorList>
            <person name="Conforti L."/>
            <person name="Tarlton A."/>
            <person name="Mack T.G.A."/>
            <person name="Mi W."/>
            <person name="Buckmaster E.A."/>
            <person name="Wagner D."/>
            <person name="Perry V.H."/>
            <person name="Coleman M.P."/>
        </authorList>
    </citation>
    <scope>NUCLEOTIDE SEQUENCE [GENOMIC DNA / MRNA]</scope>
    <source>
        <strain>129</strain>
        <strain>C57BL/6J</strain>
        <strain>C57BL/Wlds</strain>
    </source>
</reference>
<reference key="2">
    <citation type="journal article" date="2004" name="Genome Res.">
        <title>The status, quality, and expansion of the NIH full-length cDNA project: the Mammalian Gene Collection (MGC).</title>
        <authorList>
            <consortium name="The MGC Project Team"/>
        </authorList>
    </citation>
    <scope>NUCLEOTIDE SEQUENCE [LARGE SCALE MRNA]</scope>
    <source>
        <strain>C57BL/6J</strain>
        <tissue>Mammary gland</tissue>
    </source>
</reference>
<reference key="3">
    <citation type="journal article" date="2005" name="Science">
        <title>The transcriptional landscape of the mammalian genome.</title>
        <authorList>
            <person name="Carninci P."/>
            <person name="Kasukawa T."/>
            <person name="Katayama S."/>
            <person name="Gough J."/>
            <person name="Frith M.C."/>
            <person name="Maeda N."/>
            <person name="Oyama R."/>
            <person name="Ravasi T."/>
            <person name="Lenhard B."/>
            <person name="Wells C."/>
            <person name="Kodzius R."/>
            <person name="Shimokawa K."/>
            <person name="Bajic V.B."/>
            <person name="Brenner S.E."/>
            <person name="Batalov S."/>
            <person name="Forrest A.R."/>
            <person name="Zavolan M."/>
            <person name="Davis M.J."/>
            <person name="Wilming L.G."/>
            <person name="Aidinis V."/>
            <person name="Allen J.E."/>
            <person name="Ambesi-Impiombato A."/>
            <person name="Apweiler R."/>
            <person name="Aturaliya R.N."/>
            <person name="Bailey T.L."/>
            <person name="Bansal M."/>
            <person name="Baxter L."/>
            <person name="Beisel K.W."/>
            <person name="Bersano T."/>
            <person name="Bono H."/>
            <person name="Chalk A.M."/>
            <person name="Chiu K.P."/>
            <person name="Choudhary V."/>
            <person name="Christoffels A."/>
            <person name="Clutterbuck D.R."/>
            <person name="Crowe M.L."/>
            <person name="Dalla E."/>
            <person name="Dalrymple B.P."/>
            <person name="de Bono B."/>
            <person name="Della Gatta G."/>
            <person name="di Bernardo D."/>
            <person name="Down T."/>
            <person name="Engstrom P."/>
            <person name="Fagiolini M."/>
            <person name="Faulkner G."/>
            <person name="Fletcher C.F."/>
            <person name="Fukushima T."/>
            <person name="Furuno M."/>
            <person name="Futaki S."/>
            <person name="Gariboldi M."/>
            <person name="Georgii-Hemming P."/>
            <person name="Gingeras T.R."/>
            <person name="Gojobori T."/>
            <person name="Green R.E."/>
            <person name="Gustincich S."/>
            <person name="Harbers M."/>
            <person name="Hayashi Y."/>
            <person name="Hensch T.K."/>
            <person name="Hirokawa N."/>
            <person name="Hill D."/>
            <person name="Huminiecki L."/>
            <person name="Iacono M."/>
            <person name="Ikeo K."/>
            <person name="Iwama A."/>
            <person name="Ishikawa T."/>
            <person name="Jakt M."/>
            <person name="Kanapin A."/>
            <person name="Katoh M."/>
            <person name="Kawasawa Y."/>
            <person name="Kelso J."/>
            <person name="Kitamura H."/>
            <person name="Kitano H."/>
            <person name="Kollias G."/>
            <person name="Krishnan S.P."/>
            <person name="Kruger A."/>
            <person name="Kummerfeld S.K."/>
            <person name="Kurochkin I.V."/>
            <person name="Lareau L.F."/>
            <person name="Lazarevic D."/>
            <person name="Lipovich L."/>
            <person name="Liu J."/>
            <person name="Liuni S."/>
            <person name="McWilliam S."/>
            <person name="Madan Babu M."/>
            <person name="Madera M."/>
            <person name="Marchionni L."/>
            <person name="Matsuda H."/>
            <person name="Matsuzawa S."/>
            <person name="Miki H."/>
            <person name="Mignone F."/>
            <person name="Miyake S."/>
            <person name="Morris K."/>
            <person name="Mottagui-Tabar S."/>
            <person name="Mulder N."/>
            <person name="Nakano N."/>
            <person name="Nakauchi H."/>
            <person name="Ng P."/>
            <person name="Nilsson R."/>
            <person name="Nishiguchi S."/>
            <person name="Nishikawa S."/>
            <person name="Nori F."/>
            <person name="Ohara O."/>
            <person name="Okazaki Y."/>
            <person name="Orlando V."/>
            <person name="Pang K.C."/>
            <person name="Pavan W.J."/>
            <person name="Pavesi G."/>
            <person name="Pesole G."/>
            <person name="Petrovsky N."/>
            <person name="Piazza S."/>
            <person name="Reed J."/>
            <person name="Reid J.F."/>
            <person name="Ring B.Z."/>
            <person name="Ringwald M."/>
            <person name="Rost B."/>
            <person name="Ruan Y."/>
            <person name="Salzberg S.L."/>
            <person name="Sandelin A."/>
            <person name="Schneider C."/>
            <person name="Schoenbach C."/>
            <person name="Sekiguchi K."/>
            <person name="Semple C.A."/>
            <person name="Seno S."/>
            <person name="Sessa L."/>
            <person name="Sheng Y."/>
            <person name="Shibata Y."/>
            <person name="Shimada H."/>
            <person name="Shimada K."/>
            <person name="Silva D."/>
            <person name="Sinclair B."/>
            <person name="Sperling S."/>
            <person name="Stupka E."/>
            <person name="Sugiura K."/>
            <person name="Sultana R."/>
            <person name="Takenaka Y."/>
            <person name="Taki K."/>
            <person name="Tammoja K."/>
            <person name="Tan S.L."/>
            <person name="Tang S."/>
            <person name="Taylor M.S."/>
            <person name="Tegner J."/>
            <person name="Teichmann S.A."/>
            <person name="Ueda H.R."/>
            <person name="van Nimwegen E."/>
            <person name="Verardo R."/>
            <person name="Wei C.L."/>
            <person name="Yagi K."/>
            <person name="Yamanishi H."/>
            <person name="Zabarovsky E."/>
            <person name="Zhu S."/>
            <person name="Zimmer A."/>
            <person name="Hide W."/>
            <person name="Bult C."/>
            <person name="Grimmond S.M."/>
            <person name="Teasdale R.D."/>
            <person name="Liu E.T."/>
            <person name="Brusic V."/>
            <person name="Quackenbush J."/>
            <person name="Wahlestedt C."/>
            <person name="Mattick J.S."/>
            <person name="Hume D.A."/>
            <person name="Kai C."/>
            <person name="Sasaki D."/>
            <person name="Tomaru Y."/>
            <person name="Fukuda S."/>
            <person name="Kanamori-Katayama M."/>
            <person name="Suzuki M."/>
            <person name="Aoki J."/>
            <person name="Arakawa T."/>
            <person name="Iida J."/>
            <person name="Imamura K."/>
            <person name="Itoh M."/>
            <person name="Kato T."/>
            <person name="Kawaji H."/>
            <person name="Kawagashira N."/>
            <person name="Kawashima T."/>
            <person name="Kojima M."/>
            <person name="Kondo S."/>
            <person name="Konno H."/>
            <person name="Nakano K."/>
            <person name="Ninomiya N."/>
            <person name="Nishio T."/>
            <person name="Okada M."/>
            <person name="Plessy C."/>
            <person name="Shibata K."/>
            <person name="Shiraki T."/>
            <person name="Suzuki S."/>
            <person name="Tagami M."/>
            <person name="Waki K."/>
            <person name="Watahiki A."/>
            <person name="Okamura-Oho Y."/>
            <person name="Suzuki H."/>
            <person name="Kawai J."/>
            <person name="Hayashizaki Y."/>
        </authorList>
    </citation>
    <scope>NUCLEOTIDE SEQUENCE [LARGE SCALE MRNA] OF 59-134</scope>
    <source>
        <strain>C57BL/6J</strain>
        <tissue>Embryo</tissue>
    </source>
</reference>
<reference key="4">
    <citation type="journal article" date="2010" name="Cell">
        <title>A tissue-specific atlas of mouse protein phosphorylation and expression.</title>
        <authorList>
            <person name="Huttlin E.L."/>
            <person name="Jedrychowski M.P."/>
            <person name="Elias J.E."/>
            <person name="Goswami T."/>
            <person name="Rad R."/>
            <person name="Beausoleil S.A."/>
            <person name="Villen J."/>
            <person name="Haas W."/>
            <person name="Sowa M.E."/>
            <person name="Gygi S.P."/>
        </authorList>
    </citation>
    <scope>IDENTIFICATION BY MASS SPECTROMETRY [LARGE SCALE ANALYSIS]</scope>
    <source>
        <tissue>Brown adipose tissue</tissue>
        <tissue>Heart</tissue>
        <tissue>Pancreas</tissue>
    </source>
</reference>
<comment type="function">
    <text evidence="1">Intracellular transport of retinol.</text>
</comment>
<comment type="subcellular location">
    <subcellularLocation>
        <location evidence="1">Cytoplasm</location>
    </subcellularLocation>
</comment>
<comment type="tissue specificity">
    <text>Highly expressed in white adipose tissue and mammary gland.</text>
</comment>
<comment type="domain">
    <text evidence="1">Forms a beta-barrel structure that accommodates hydrophobic ligands in its interior.</text>
</comment>
<comment type="similarity">
    <text evidence="2">Belongs to the calycin superfamily. Fatty-acid binding protein (FABP) family.</text>
</comment>
<accession>Q9EPC5</accession>
<accession>Q9CTK0</accession>
<feature type="chain" id="PRO_0000067404" description="Retinoid-binding protein 7">
    <location>
        <begin position="1"/>
        <end position="134"/>
    </location>
</feature>
<sequence length="134" mass="15428">MPADLSGTWNLLSSDNFEGYMLALGIDFATRKIAKLLKPQKVIEQNGDSFTIQTCSSLRNYLVKFKVGEEFEEDNKGLDNRKCTSLVTWENDKLTCVQRGEKKNRGWSHWIEGDQLHLEMFCEGQVCKQTFQRA</sequence>
<evidence type="ECO:0000250" key="1"/>
<evidence type="ECO:0000305" key="2"/>